<comment type="function">
    <text evidence="6 8">Transcription factor that regulates the expression of the asc-1 and asc-2 gene clusters that mediate the biosynthesis of both ascochlorin and ascofuranone, a strong inhibitor of cyanide-insensitive alternative oxidases and a promising drug candidate against African trypanosomiasis (PubMed:30952781). Binds the 5'-CGGYGNNTTW-3' motif within promoters of the target genes (Probable).</text>
</comment>
<comment type="subcellular location">
    <subcellularLocation>
        <location evidence="1">Nucleus</location>
    </subcellularLocation>
</comment>
<comment type="induction">
    <text evidence="6">Expression is induced on AF medium.</text>
</comment>
<comment type="biotechnology">
    <text evidence="3 4 5">Ascofuranone is a specific inhibitor of trypanosome alternative oxidase (TAO), and quickly kills African trypanosomes in vitro and cures infected mice. As an essential factor for trypanosome survival, TAO is a promising drug target due to the absence of alternative oxidases in the mammalian host.</text>
</comment>
<organism>
    <name type="scientific">Acremonium egyptiacum</name>
    <name type="common">Oospora egyptiaca</name>
    <dbReference type="NCBI Taxonomy" id="749675"/>
    <lineage>
        <taxon>Eukaryota</taxon>
        <taxon>Fungi</taxon>
        <taxon>Dikarya</taxon>
        <taxon>Ascomycota</taxon>
        <taxon>Pezizomycotina</taxon>
        <taxon>Sordariomycetes</taxon>
        <taxon>Hypocreomycetidae</taxon>
        <taxon>Hypocreales</taxon>
        <taxon>Hypocreales incertae sedis</taxon>
        <taxon>Acremonium</taxon>
    </lineage>
</organism>
<accession>A0A455R614</accession>
<protein>
    <recommendedName>
        <fullName evidence="7">Ascofuranone/ascochlorin biosynthesis clusters transcription regulator</fullName>
    </recommendedName>
</protein>
<name>ASCR_ACREG</name>
<evidence type="ECO:0000255" key="1">
    <source>
        <dbReference type="PROSITE-ProRule" id="PRU00227"/>
    </source>
</evidence>
<evidence type="ECO:0000256" key="2">
    <source>
        <dbReference type="SAM" id="MobiDB-lite"/>
    </source>
</evidence>
<evidence type="ECO:0000269" key="3">
    <source>
    </source>
</evidence>
<evidence type="ECO:0000269" key="4">
    <source>
    </source>
</evidence>
<evidence type="ECO:0000269" key="5">
    <source>
    </source>
</evidence>
<evidence type="ECO:0000269" key="6">
    <source>
    </source>
</evidence>
<evidence type="ECO:0000303" key="7">
    <source>
    </source>
</evidence>
<evidence type="ECO:0000305" key="8">
    <source>
    </source>
</evidence>
<feature type="chain" id="PRO_0000448997" description="Ascofuranone/ascochlorin biosynthesis clusters transcription regulator">
    <location>
        <begin position="1"/>
        <end position="512"/>
    </location>
</feature>
<feature type="DNA-binding region" description="Zn(2)-C6 fungal-type" evidence="1">
    <location>
        <begin position="14"/>
        <end position="49"/>
    </location>
</feature>
<feature type="region of interest" description="Disordered" evidence="2">
    <location>
        <begin position="54"/>
        <end position="87"/>
    </location>
</feature>
<feature type="region of interest" description="Disordered" evidence="2">
    <location>
        <begin position="118"/>
        <end position="148"/>
    </location>
</feature>
<feature type="region of interest" description="Disordered" evidence="2">
    <location>
        <begin position="325"/>
        <end position="351"/>
    </location>
</feature>
<feature type="compositionally biased region" description="Basic residues" evidence="2">
    <location>
        <begin position="56"/>
        <end position="70"/>
    </location>
</feature>
<feature type="compositionally biased region" description="Low complexity" evidence="2">
    <location>
        <begin position="118"/>
        <end position="127"/>
    </location>
</feature>
<feature type="compositionally biased region" description="Low complexity" evidence="2">
    <location>
        <begin position="327"/>
        <end position="342"/>
    </location>
</feature>
<sequence length="512" mass="55269">MGNSANEDKLRYACDRCHSQKLRCPRSVEPEKANPEEPCSRCRKAGVPCVVSLRGKVGRPSKATKKKSARSPRATSTPEAEFPPYDINSVLSGEVDGSIPWASPSGDRMMDMFDLASGSGSVTTSASPKTMAEDYQPEGQRPFPDPLMGPGLIQVPYEPFLMEFDTDADYPTFCIPPSLTDMPAGVEFNQPQDKTFNSSQMDSFMDVKTDASMMMPHADMDMTSPKGTGPTIDPVTVDPRMSFSAHAAQSPGDIFASDDFEAGAEFSSTASYQKLSDLNLRILQCGSTAQAGTAPQNSSQLLKDVVGFSGELIDIARQSMPHFVGCTRSSSRASTTSKGSSMESDEGDGSIDTAFSQSSWGSLKPGSASGPQATSQSVPESAVIFLLLGCYTQILHLFELTTNCLWAQHCEAGQPAPQNDDTSGTIGSLLEASIAIHTVTYLLSRLHRALAAPEMDASTDAADSHGWKKSFVGGKELEDGLLGRAFGEIREREQWLMRRTKHLQQRINKCHI</sequence>
<reference key="1">
    <citation type="journal article" date="2019" name="Proc. Natl. Acad. Sci. U.S.A.">
        <title>Complete biosynthetic pathways of ascofuranone and ascochlorin in Acremonium egyptiacum.</title>
        <authorList>
            <person name="Araki Y."/>
            <person name="Awakawa T."/>
            <person name="Matsuzaki M."/>
            <person name="Cho R."/>
            <person name="Matsuda Y."/>
            <person name="Hoshino S."/>
            <person name="Shinohara Y."/>
            <person name="Yamamoto M."/>
            <person name="Kido Y."/>
            <person name="Inaoka D.K."/>
            <person name="Nagamune K."/>
            <person name="Ito K."/>
            <person name="Abe I."/>
            <person name="Kita K."/>
        </authorList>
    </citation>
    <scope>NUCLEOTIDE SEQUENCE [GENOMIC DNA]</scope>
    <scope>FUNCTION</scope>
    <scope>CATALYTIC ACTIVITY</scope>
    <scope>INDUCTION</scope>
    <scope>PATHWAY</scope>
    <source>
        <strain>F-1392</strain>
    </source>
</reference>
<reference key="2">
    <citation type="journal article" date="2002" name="Biochim. Biophys. Acta">
        <title>Trypanosome alternative oxidase as a target of chemotherapy.</title>
        <authorList>
            <person name="Nihei C."/>
            <person name="Fukai Y."/>
            <person name="Kita K."/>
        </authorList>
    </citation>
    <scope>BIOTECHNOLOGY</scope>
</reference>
<reference key="3">
    <citation type="journal article" date="2003" name="Parasitol. Int.">
        <title>The efficacy of ascofuranone in a consecutive treatment on Trypanosoma brucei brucei in mice.</title>
        <authorList>
            <person name="Yabu Y."/>
            <person name="Yoshida A."/>
            <person name="Suzuki T."/>
            <person name="Nihei C."/>
            <person name="Kawai K."/>
            <person name="Minagawa N."/>
            <person name="Hosokawa T."/>
            <person name="Nagai K."/>
            <person name="Kita K."/>
            <person name="Ohta N."/>
        </authorList>
    </citation>
    <scope>BIOTECHNOLOGY</scope>
</reference>
<reference key="4">
    <citation type="journal article" date="2010" name="Parasitol. Int.">
        <title>Trypanosome alternative oxidase, a potential therapeutic target for sleeping sickness, is conserved among Trypanosoma brucei subspecies.</title>
        <authorList>
            <person name="Nakamura K."/>
            <person name="Fujioka S."/>
            <person name="Fukumoto S."/>
            <person name="Inoue N."/>
            <person name="Sakamoto K."/>
            <person name="Hirata H."/>
            <person name="Kido Y."/>
            <person name="Yabu Y."/>
            <person name="Suzuki T."/>
            <person name="Watanabe Y."/>
            <person name="Saimoto H."/>
            <person name="Akiyama H."/>
            <person name="Kita K."/>
        </authorList>
    </citation>
    <scope>BIOTECHNOLOGY</scope>
</reference>
<gene>
    <name evidence="7" type="primary">ascR</name>
</gene>
<proteinExistence type="evidence at protein level"/>
<keyword id="KW-0238">DNA-binding</keyword>
<keyword id="KW-0479">Metal-binding</keyword>
<keyword id="KW-0539">Nucleus</keyword>
<keyword id="KW-0804">Transcription</keyword>
<keyword id="KW-0805">Transcription regulation</keyword>
<keyword id="KW-0862">Zinc</keyword>
<dbReference type="EMBL" id="LC406756">
    <property type="protein sequence ID" value="BBF25312.1"/>
    <property type="molecule type" value="Genomic_DNA"/>
</dbReference>
<dbReference type="SMR" id="A0A455R614"/>
<dbReference type="GO" id="GO:0005634">
    <property type="term" value="C:nucleus"/>
    <property type="evidence" value="ECO:0007669"/>
    <property type="project" value="UniProtKB-SubCell"/>
</dbReference>
<dbReference type="GO" id="GO:0003677">
    <property type="term" value="F:DNA binding"/>
    <property type="evidence" value="ECO:0007669"/>
    <property type="project" value="UniProtKB-KW"/>
</dbReference>
<dbReference type="GO" id="GO:0000981">
    <property type="term" value="F:DNA-binding transcription factor activity, RNA polymerase II-specific"/>
    <property type="evidence" value="ECO:0007669"/>
    <property type="project" value="InterPro"/>
</dbReference>
<dbReference type="GO" id="GO:0008270">
    <property type="term" value="F:zinc ion binding"/>
    <property type="evidence" value="ECO:0007669"/>
    <property type="project" value="InterPro"/>
</dbReference>
<dbReference type="GO" id="GO:0001080">
    <property type="term" value="P:nitrogen catabolite activation of transcription from RNA polymerase II promoter"/>
    <property type="evidence" value="ECO:0007669"/>
    <property type="project" value="TreeGrafter"/>
</dbReference>
<dbReference type="CDD" id="cd00067">
    <property type="entry name" value="GAL4"/>
    <property type="match status" value="1"/>
</dbReference>
<dbReference type="Gene3D" id="4.10.240.10">
    <property type="entry name" value="Zn(2)-C6 fungal-type DNA-binding domain"/>
    <property type="match status" value="1"/>
</dbReference>
<dbReference type="InterPro" id="IPR050797">
    <property type="entry name" value="Carb_Metab_Trans_Reg"/>
</dbReference>
<dbReference type="InterPro" id="IPR036864">
    <property type="entry name" value="Zn2-C6_fun-type_DNA-bd_sf"/>
</dbReference>
<dbReference type="InterPro" id="IPR001138">
    <property type="entry name" value="Zn2Cys6_DnaBD"/>
</dbReference>
<dbReference type="PANTHER" id="PTHR31668">
    <property type="entry name" value="GLUCOSE TRANSPORT TRANSCRIPTION REGULATOR RGT1-RELATED-RELATED"/>
    <property type="match status" value="1"/>
</dbReference>
<dbReference type="PANTHER" id="PTHR31668:SF4">
    <property type="entry name" value="TRANSCRIPTIONAL ACTIVATOR PROTEIN DAL81"/>
    <property type="match status" value="1"/>
</dbReference>
<dbReference type="Pfam" id="PF00172">
    <property type="entry name" value="Zn_clus"/>
    <property type="match status" value="1"/>
</dbReference>
<dbReference type="SMART" id="SM00066">
    <property type="entry name" value="GAL4"/>
    <property type="match status" value="1"/>
</dbReference>
<dbReference type="SUPFAM" id="SSF57701">
    <property type="entry name" value="Zn2/Cys6 DNA-binding domain"/>
    <property type="match status" value="1"/>
</dbReference>
<dbReference type="PROSITE" id="PS50048">
    <property type="entry name" value="ZN2_CY6_FUNGAL_2"/>
    <property type="match status" value="1"/>
</dbReference>